<dbReference type="EMBL" id="LK023119">
    <property type="protein sequence ID" value="VUC54370.1"/>
    <property type="molecule type" value="Genomic_DNA"/>
</dbReference>
<dbReference type="RefSeq" id="XP_673809.1">
    <property type="nucleotide sequence ID" value="XM_668717.1"/>
</dbReference>
<dbReference type="FunCoup" id="A0A509ADH4">
    <property type="interactions" value="52"/>
</dbReference>
<dbReference type="STRING" id="5823.A0A509ADH4"/>
<dbReference type="VEuPathDB" id="PlasmoDB:PBANKA_0414500"/>
<dbReference type="InParanoid" id="A0A509ADH4"/>
<dbReference type="OMA" id="CMIPGPW"/>
<dbReference type="Proteomes" id="UP000074855">
    <property type="component" value="Chromosome 4"/>
</dbReference>
<dbReference type="GO" id="GO:0005789">
    <property type="term" value="C:endoplasmic reticulum membrane"/>
    <property type="evidence" value="ECO:0000315"/>
    <property type="project" value="UniProtKB"/>
</dbReference>
<dbReference type="GO" id="GO:1990809">
    <property type="term" value="P:endoplasmic reticulum tubular network membrane organization"/>
    <property type="evidence" value="ECO:0000314"/>
    <property type="project" value="UniProtKB"/>
</dbReference>
<dbReference type="GO" id="GO:0007033">
    <property type="term" value="P:vacuole organization"/>
    <property type="evidence" value="ECO:0000315"/>
    <property type="project" value="UniProtKB"/>
</dbReference>
<dbReference type="InterPro" id="IPR004345">
    <property type="entry name" value="TB2_DP1_HVA22"/>
</dbReference>
<dbReference type="PANTHER" id="PTHR12300">
    <property type="entry name" value="HVA22-LIKE PROTEINS"/>
    <property type="match status" value="1"/>
</dbReference>
<dbReference type="PANTHER" id="PTHR12300:SF161">
    <property type="entry name" value="RECEPTOR EXPRESSION-ENHANCING PROTEIN"/>
    <property type="match status" value="1"/>
</dbReference>
<dbReference type="Pfam" id="PF03134">
    <property type="entry name" value="TB2_DP1_HVA22"/>
    <property type="match status" value="1"/>
</dbReference>
<evidence type="ECO:0000250" key="1">
    <source>
        <dbReference type="UniProtKB" id="Q12402"/>
    </source>
</evidence>
<evidence type="ECO:0000255" key="2"/>
<evidence type="ECO:0000255" key="3">
    <source>
        <dbReference type="RuleBase" id="RU362006"/>
    </source>
</evidence>
<evidence type="ECO:0000256" key="4">
    <source>
        <dbReference type="SAM" id="MobiDB-lite"/>
    </source>
</evidence>
<evidence type="ECO:0000269" key="5">
    <source>
    </source>
</evidence>
<evidence type="ECO:0000269" key="6">
    <source>
    </source>
</evidence>
<evidence type="ECO:0000303" key="7">
    <source>
    </source>
</evidence>
<evidence type="ECO:0000305" key="8"/>
<evidence type="ECO:0000312" key="9">
    <source>
        <dbReference type="EMBL" id="VUC54370.1"/>
    </source>
</evidence>
<evidence type="ECO:0000312" key="10">
    <source>
        <dbReference type="Proteomes" id="UP000074855"/>
    </source>
</evidence>
<sequence length="226" mass="26311">MRMSKLYKNKEKENEKPSNEPPIKQDSLKRMSSKFLGNSLNSFDLSGKLEQVDEYLKKYPFIIEFGYKLGIKPSYIVVFGGSALFISLVLGWGAALICNLVGFAYPAYQSFKAVESQGHAETKLWLTYWVVFSLFFFIEYLIDIILFWIPFYYVIKLLFLLYLYMPQVRGAETVYNYIIRPILLKHEKTIDDTVHKISQTATNHLNQFTGNIAEKLVQEGVRRRNV</sequence>
<reference evidence="10" key="1">
    <citation type="journal article" date="2014" name="BMC Biol.">
        <title>A comprehensive evaluation of rodent malaria parasite genomes and gene expression.</title>
        <authorList>
            <person name="Otto T.D."/>
            <person name="Bohme U."/>
            <person name="Jackson A.P."/>
            <person name="Hunt M."/>
            <person name="Franke-Fayard B."/>
            <person name="Hoeijmakers W.A."/>
            <person name="Religa A.A."/>
            <person name="Robertson L."/>
            <person name="Sanders M."/>
            <person name="Ogun S.A."/>
            <person name="Cunningham D."/>
            <person name="Erhart A."/>
            <person name="Billker O."/>
            <person name="Khan S.M."/>
            <person name="Stunnenberg H.G."/>
            <person name="Langhorne J."/>
            <person name="Holder A.A."/>
            <person name="Waters A.P."/>
            <person name="Newbold C.I."/>
            <person name="Pain A."/>
            <person name="Berriman M."/>
            <person name="Janse C.J."/>
        </authorList>
    </citation>
    <scope>NUCLEOTIDE SEQUENCE [LARGE SCALE GENOMIC DNA]</scope>
    <source>
        <strain evidence="10">ANKA</strain>
    </source>
</reference>
<reference evidence="8" key="2">
    <citation type="journal article" date="2016" name="Protein Cell">
        <title>Identification of endoplasmic reticulum-shaping proteins in Plasmodium parasites.</title>
        <authorList>
            <person name="Sun S."/>
            <person name="Lv L."/>
            <person name="Yao Z."/>
            <person name="Bhanot P."/>
            <person name="Hu J."/>
            <person name="Wang Q."/>
        </authorList>
    </citation>
    <scope>FUNCTION</scope>
    <scope>SUBUNIT</scope>
    <scope>DOMAIN</scope>
    <scope>MUTAGENESIS OF 2-ARG--ASN-38; LEU-45; LEU-49; VAL-52; 171-ALA--VAL-226 AND 187-GLU--VAL-226</scope>
</reference>
<reference evidence="8" key="3">
    <citation type="journal article" date="2020" name="Mol. Microbiol.">
        <title>A Plasmodium homolog of ER tubule-forming proteins is required for parasite virulence.</title>
        <authorList>
            <person name="Shi X."/>
            <person name="Hai L."/>
            <person name="Govindasamy K."/>
            <person name="Gao J."/>
            <person name="Coppens I."/>
            <person name="Hu J."/>
            <person name="Wang Q."/>
            <person name="Bhanot P."/>
        </authorList>
    </citation>
    <scope>FUNCTION</scope>
    <scope>SUBCELLULAR LOCATION</scope>
    <scope>DEVELOPMENTAL STAGE</scope>
    <scope>DISRUPTION PHENOTYPE</scope>
</reference>
<comment type="function">
    <text evidence="5 6">Required to generate and maintain the structure of the tubular endoplasmic reticulum network and the digestive (food) vacuole (PubMed:27484902, PubMed:32432369). Induces high curvature in membranes and causes membrane tubule formation (PubMed:27484902).</text>
</comment>
<comment type="subunit">
    <text evidence="5">May form oligomers.</text>
</comment>
<comment type="subcellular location">
    <subcellularLocation>
        <location evidence="6">Endoplasmic reticulum membrane</location>
        <topology evidence="2">Multi-pass membrane protein</topology>
    </subcellularLocation>
</comment>
<comment type="developmental stage">
    <text evidence="6">Expressed during the asexual blood stage (at protein level) (PubMed:32432369). Expressed in sporozoites (at protein level) (PubMed:32432369). Not expressed in host liver 48 hours post-infection (at protein level) (PubMed:32432369).</text>
</comment>
<comment type="domain">
    <text evidence="5">The N-terminus is important for protein stability.</text>
</comment>
<comment type="domain">
    <text evidence="5">The C-terminus is dispensable for the formation of membrane tubules.</text>
</comment>
<comment type="domain">
    <text evidence="1">The short lumenal loops between transmembrane domains 1 and 2 and between transmembrane domains 3 and 4 may impart a wedge-like configuration, thus deforming membranes.</text>
</comment>
<comment type="disruption phenotype">
    <text evidence="6">During the asexual blood stage, parasites have a slower growth, a delayed ring-to-trophozoite transition and display abnormal endoplasmic reticulum architecture and an enlarged digestive vacuole (PubMed:32432369). In infected mice, the number of male and female gametes is reduced, resulting in a severe decrease in the number of midgut oocytes and salivary gland sporozoites in the mosquito (PubMed:32432369). Sporozoites have a slight reduction in motility and the invasion of host hepatocytes is slightly delayed (PubMed:32432369). In C57BL/6 mice, parasitemia is reduced and the parasite fails to induce experimental cerebral malaria (ECM) (PubMed:32432369).</text>
</comment>
<comment type="similarity">
    <text evidence="3">Belongs to the DP1 family.</text>
</comment>
<keyword id="KW-0256">Endoplasmic reticulum</keyword>
<keyword id="KW-0472">Membrane</keyword>
<keyword id="KW-1185">Reference proteome</keyword>
<keyword id="KW-0812">Transmembrane</keyword>
<keyword id="KW-1133">Transmembrane helix</keyword>
<organism evidence="10">
    <name type="scientific">Plasmodium berghei (strain Anka)</name>
    <dbReference type="NCBI Taxonomy" id="5823"/>
    <lineage>
        <taxon>Eukaryota</taxon>
        <taxon>Sar</taxon>
        <taxon>Alveolata</taxon>
        <taxon>Apicomplexa</taxon>
        <taxon>Aconoidasida</taxon>
        <taxon>Haemosporida</taxon>
        <taxon>Plasmodiidae</taxon>
        <taxon>Plasmodium</taxon>
        <taxon>Plasmodium (Vinckeia)</taxon>
    </lineage>
</organism>
<protein>
    <recommendedName>
        <fullName evidence="7">Protein YOP1 homolog</fullName>
        <shortName evidence="7">PbYOP1</shortName>
    </recommendedName>
</protein>
<gene>
    <name evidence="7" type="primary">YOP1</name>
    <name evidence="9" type="ORF">PBANKA_0414500</name>
</gene>
<name>YOP1_PLABA</name>
<accession>A0A509ADH4</accession>
<feature type="chain" id="PRO_0000454706" description="Protein YOP1 homolog">
    <location>
        <begin position="1"/>
        <end position="226"/>
    </location>
</feature>
<feature type="topological domain" description="Cytoplasmic" evidence="1">
    <location>
        <begin position="1"/>
        <end position="72"/>
    </location>
</feature>
<feature type="transmembrane region" description="Helical" evidence="1">
    <location>
        <begin position="73"/>
        <end position="92"/>
    </location>
</feature>
<feature type="topological domain" description="Lumenal" evidence="1">
    <location>
        <begin position="93"/>
        <end position="94"/>
    </location>
</feature>
<feature type="transmembrane region" description="Helical" evidence="1">
    <location>
        <begin position="95"/>
        <end position="113"/>
    </location>
</feature>
<feature type="topological domain" description="Cytoplasmic" evidence="1">
    <location>
        <begin position="114"/>
        <end position="123"/>
    </location>
</feature>
<feature type="transmembrane region" description="Helical" evidence="1">
    <location>
        <begin position="124"/>
        <end position="140"/>
    </location>
</feature>
<feature type="topological domain" description="Lumenal" evidence="1">
    <location>
        <begin position="141"/>
        <end position="143"/>
    </location>
</feature>
<feature type="transmembrane region" description="Helical" evidence="1">
    <location>
        <begin position="144"/>
        <end position="162"/>
    </location>
</feature>
<feature type="topological domain" description="Cytoplasmic" evidence="1">
    <location>
        <begin position="163"/>
        <end position="226"/>
    </location>
</feature>
<feature type="region of interest" description="Disordered" evidence="4">
    <location>
        <begin position="1"/>
        <end position="25"/>
    </location>
</feature>
<feature type="compositionally biased region" description="Basic and acidic residues" evidence="4">
    <location>
        <begin position="8"/>
        <end position="18"/>
    </location>
</feature>
<feature type="mutagenesis site" description="Does not affect membrane tubule formation; when associated with 171-A--V-226 DEL or with D-45, D-49, D-52 and 187-E--V-226 DEL." evidence="5">
    <location>
        <begin position="2"/>
        <end position="38"/>
    </location>
</feature>
<feature type="mutagenesis site" description="Does not affect membrane tubule formation; when associated with 2-R--N-38 DEL and 187-E--V-226 DEL." evidence="5">
    <original>LSGKLEQV</original>
    <variation>DSGKDEQD</variation>
    <location>
        <begin position="45"/>
        <end position="52"/>
    </location>
</feature>
<feature type="mutagenesis site" description="Does not affect membrane tubule formation; when associated with D-49, D-52, 2-R--N-38 DEL and 187-E--V-226 DEL." evidence="5">
    <original>L</original>
    <variation>D</variation>
    <location>
        <position position="45"/>
    </location>
</feature>
<feature type="mutagenesis site" description="Does not affect membrane tubule formation; when associated with D-45, D-52, 2-R--N-38 DEL and 187-E--V-226 DEL." evidence="5">
    <original>L</original>
    <variation>D</variation>
    <location>
        <position position="49"/>
    </location>
</feature>
<feature type="mutagenesis site" description="Does not affect membrane tubule formation; when associated with D-45, D-49, 2-R--N-38 DEL and 187-E--V-226 DEL." evidence="5">
    <original>V</original>
    <variation>D</variation>
    <location>
        <position position="52"/>
    </location>
</feature>
<feature type="mutagenesis site" description="Does not affect membrane tubule formation; when associated with 2-R--N-38 DEL." evidence="5">
    <location>
        <begin position="171"/>
        <end position="226"/>
    </location>
</feature>
<feature type="mutagenesis site" description="Does not affect membrane tubule formation; when associated with D-45, D-49, D-52 and 2-R--N-38 DEL." evidence="5">
    <location>
        <begin position="187"/>
        <end position="226"/>
    </location>
</feature>
<proteinExistence type="evidence at protein level"/>